<gene>
    <name evidence="1" type="primary">ruvA</name>
    <name type="ordered locus">glr2884</name>
</gene>
<name>RUVA_GLOVI</name>
<organism>
    <name type="scientific">Gloeobacter violaceus (strain ATCC 29082 / PCC 7421)</name>
    <dbReference type="NCBI Taxonomy" id="251221"/>
    <lineage>
        <taxon>Bacteria</taxon>
        <taxon>Bacillati</taxon>
        <taxon>Cyanobacteriota</taxon>
        <taxon>Cyanophyceae</taxon>
        <taxon>Gloeobacterales</taxon>
        <taxon>Gloeobacteraceae</taxon>
        <taxon>Gloeobacter</taxon>
    </lineage>
</organism>
<feature type="chain" id="PRO_0000094634" description="Holliday junction branch migration complex subunit RuvA">
    <location>
        <begin position="1"/>
        <end position="206"/>
    </location>
</feature>
<feature type="region of interest" description="Domain I" evidence="1">
    <location>
        <begin position="1"/>
        <end position="68"/>
    </location>
</feature>
<feature type="region of interest" description="Domain II" evidence="1">
    <location>
        <begin position="69"/>
        <end position="147"/>
    </location>
</feature>
<feature type="region of interest" description="Flexible linker" evidence="1">
    <location>
        <begin position="147"/>
        <end position="151"/>
    </location>
</feature>
<feature type="region of interest" description="Domain III" evidence="1">
    <location>
        <begin position="152"/>
        <end position="206"/>
    </location>
</feature>
<keyword id="KW-0963">Cytoplasm</keyword>
<keyword id="KW-0227">DNA damage</keyword>
<keyword id="KW-0233">DNA recombination</keyword>
<keyword id="KW-0234">DNA repair</keyword>
<keyword id="KW-0238">DNA-binding</keyword>
<keyword id="KW-1185">Reference proteome</keyword>
<comment type="function">
    <text evidence="1">The RuvA-RuvB-RuvC complex processes Holliday junction (HJ) DNA during genetic recombination and DNA repair, while the RuvA-RuvB complex plays an important role in the rescue of blocked DNA replication forks via replication fork reversal (RFR). RuvA specifically binds to HJ cruciform DNA, conferring on it an open structure. The RuvB hexamer acts as an ATP-dependent pump, pulling dsDNA into and through the RuvAB complex. HJ branch migration allows RuvC to scan DNA until it finds its consensus sequence, where it cleaves and resolves the cruciform DNA.</text>
</comment>
<comment type="subunit">
    <text evidence="1">Homotetramer. Forms an RuvA(8)-RuvB(12)-Holliday junction (HJ) complex. HJ DNA is sandwiched between 2 RuvA tetramers; dsDNA enters through RuvA and exits via RuvB. An RuvB hexamer assembles on each DNA strand where it exits the tetramer. Each RuvB hexamer is contacted by two RuvA subunits (via domain III) on 2 adjacent RuvB subunits; this complex drives branch migration. In the full resolvosome a probable DNA-RuvA(4)-RuvB(12)-RuvC(2) complex forms which resolves the HJ.</text>
</comment>
<comment type="subcellular location">
    <subcellularLocation>
        <location evidence="1">Cytoplasm</location>
    </subcellularLocation>
</comment>
<comment type="domain">
    <text evidence="1">Has three domains with a flexible linker between the domains II and III and assumes an 'L' shape. Domain III is highly mobile and contacts RuvB.</text>
</comment>
<comment type="similarity">
    <text evidence="1">Belongs to the RuvA family.</text>
</comment>
<proteinExistence type="inferred from homology"/>
<protein>
    <recommendedName>
        <fullName evidence="1">Holliday junction branch migration complex subunit RuvA</fullName>
    </recommendedName>
</protein>
<dbReference type="EMBL" id="BA000045">
    <property type="protein sequence ID" value="BAC90825.1"/>
    <property type="molecule type" value="Genomic_DNA"/>
</dbReference>
<dbReference type="RefSeq" id="NP_925830.1">
    <property type="nucleotide sequence ID" value="NC_005125.1"/>
</dbReference>
<dbReference type="RefSeq" id="WP_011142878.1">
    <property type="nucleotide sequence ID" value="NC_005125.1"/>
</dbReference>
<dbReference type="SMR" id="Q7NCU2"/>
<dbReference type="FunCoup" id="Q7NCU2">
    <property type="interactions" value="57"/>
</dbReference>
<dbReference type="STRING" id="251221.gene:10760388"/>
<dbReference type="EnsemblBacteria" id="BAC90825">
    <property type="protein sequence ID" value="BAC90825"/>
    <property type="gene ID" value="BAC90825"/>
</dbReference>
<dbReference type="KEGG" id="gvi:glr2884"/>
<dbReference type="PATRIC" id="fig|251221.4.peg.2914"/>
<dbReference type="eggNOG" id="COG0632">
    <property type="taxonomic scope" value="Bacteria"/>
</dbReference>
<dbReference type="HOGENOM" id="CLU_087936_0_0_3"/>
<dbReference type="InParanoid" id="Q7NCU2"/>
<dbReference type="OrthoDB" id="5293449at2"/>
<dbReference type="PhylomeDB" id="Q7NCU2"/>
<dbReference type="Proteomes" id="UP000000557">
    <property type="component" value="Chromosome"/>
</dbReference>
<dbReference type="GO" id="GO:0005737">
    <property type="term" value="C:cytoplasm"/>
    <property type="evidence" value="ECO:0007669"/>
    <property type="project" value="UniProtKB-SubCell"/>
</dbReference>
<dbReference type="GO" id="GO:0009379">
    <property type="term" value="C:Holliday junction helicase complex"/>
    <property type="evidence" value="ECO:0007669"/>
    <property type="project" value="InterPro"/>
</dbReference>
<dbReference type="GO" id="GO:0048476">
    <property type="term" value="C:Holliday junction resolvase complex"/>
    <property type="evidence" value="ECO:0007669"/>
    <property type="project" value="UniProtKB-UniRule"/>
</dbReference>
<dbReference type="GO" id="GO:0005524">
    <property type="term" value="F:ATP binding"/>
    <property type="evidence" value="ECO:0007669"/>
    <property type="project" value="InterPro"/>
</dbReference>
<dbReference type="GO" id="GO:0000400">
    <property type="term" value="F:four-way junction DNA binding"/>
    <property type="evidence" value="ECO:0007669"/>
    <property type="project" value="UniProtKB-UniRule"/>
</dbReference>
<dbReference type="GO" id="GO:0009378">
    <property type="term" value="F:four-way junction helicase activity"/>
    <property type="evidence" value="ECO:0000318"/>
    <property type="project" value="GO_Central"/>
</dbReference>
<dbReference type="GO" id="GO:0006310">
    <property type="term" value="P:DNA recombination"/>
    <property type="evidence" value="ECO:0007669"/>
    <property type="project" value="UniProtKB-UniRule"/>
</dbReference>
<dbReference type="GO" id="GO:0006281">
    <property type="term" value="P:DNA repair"/>
    <property type="evidence" value="ECO:0007669"/>
    <property type="project" value="UniProtKB-UniRule"/>
</dbReference>
<dbReference type="GO" id="GO:0009432">
    <property type="term" value="P:SOS response"/>
    <property type="evidence" value="ECO:0000318"/>
    <property type="project" value="GO_Central"/>
</dbReference>
<dbReference type="CDD" id="cd14332">
    <property type="entry name" value="UBA_RuvA_C"/>
    <property type="match status" value="1"/>
</dbReference>
<dbReference type="Gene3D" id="1.10.150.20">
    <property type="entry name" value="5' to 3' exonuclease, C-terminal subdomain"/>
    <property type="match status" value="1"/>
</dbReference>
<dbReference type="Gene3D" id="2.40.50.140">
    <property type="entry name" value="Nucleic acid-binding proteins"/>
    <property type="match status" value="1"/>
</dbReference>
<dbReference type="HAMAP" id="MF_00031">
    <property type="entry name" value="DNA_HJ_migration_RuvA"/>
    <property type="match status" value="1"/>
</dbReference>
<dbReference type="InterPro" id="IPR013849">
    <property type="entry name" value="DNA_helicase_Holl-junc_RuvA_I"/>
</dbReference>
<dbReference type="InterPro" id="IPR003583">
    <property type="entry name" value="Hlx-hairpin-Hlx_DNA-bd_motif"/>
</dbReference>
<dbReference type="InterPro" id="IPR012340">
    <property type="entry name" value="NA-bd_OB-fold"/>
</dbReference>
<dbReference type="InterPro" id="IPR000085">
    <property type="entry name" value="RuvA"/>
</dbReference>
<dbReference type="InterPro" id="IPR010994">
    <property type="entry name" value="RuvA_2-like"/>
</dbReference>
<dbReference type="InterPro" id="IPR011114">
    <property type="entry name" value="RuvA_C"/>
</dbReference>
<dbReference type="InterPro" id="IPR036267">
    <property type="entry name" value="RuvA_C_sf"/>
</dbReference>
<dbReference type="NCBIfam" id="TIGR00084">
    <property type="entry name" value="ruvA"/>
    <property type="match status" value="1"/>
</dbReference>
<dbReference type="Pfam" id="PF14520">
    <property type="entry name" value="HHH_5"/>
    <property type="match status" value="1"/>
</dbReference>
<dbReference type="Pfam" id="PF07499">
    <property type="entry name" value="RuvA_C"/>
    <property type="match status" value="1"/>
</dbReference>
<dbReference type="Pfam" id="PF01330">
    <property type="entry name" value="RuvA_N"/>
    <property type="match status" value="1"/>
</dbReference>
<dbReference type="SMART" id="SM00278">
    <property type="entry name" value="HhH1"/>
    <property type="match status" value="2"/>
</dbReference>
<dbReference type="SUPFAM" id="SSF46929">
    <property type="entry name" value="DNA helicase RuvA subunit, C-terminal domain"/>
    <property type="match status" value="1"/>
</dbReference>
<dbReference type="SUPFAM" id="SSF50249">
    <property type="entry name" value="Nucleic acid-binding proteins"/>
    <property type="match status" value="1"/>
</dbReference>
<dbReference type="SUPFAM" id="SSF47781">
    <property type="entry name" value="RuvA domain 2-like"/>
    <property type="match status" value="1"/>
</dbReference>
<evidence type="ECO:0000255" key="1">
    <source>
        <dbReference type="HAMAP-Rule" id="MF_00031"/>
    </source>
</evidence>
<reference key="1">
    <citation type="journal article" date="2003" name="DNA Res.">
        <title>Complete genome structure of Gloeobacter violaceus PCC 7421, a cyanobacterium that lacks thylakoids.</title>
        <authorList>
            <person name="Nakamura Y."/>
            <person name="Kaneko T."/>
            <person name="Sato S."/>
            <person name="Mimuro M."/>
            <person name="Miyashita H."/>
            <person name="Tsuchiya T."/>
            <person name="Sasamoto S."/>
            <person name="Watanabe A."/>
            <person name="Kawashima K."/>
            <person name="Kishida Y."/>
            <person name="Kiyokawa C."/>
            <person name="Kohara M."/>
            <person name="Matsumoto M."/>
            <person name="Matsuno A."/>
            <person name="Nakazaki N."/>
            <person name="Shimpo S."/>
            <person name="Takeuchi C."/>
            <person name="Yamada M."/>
            <person name="Tabata S."/>
        </authorList>
    </citation>
    <scope>NUCLEOTIDE SEQUENCE [LARGE SCALE GENOMIC DNA]</scope>
    <source>
        <strain>ATCC 29082 / PCC 7421</strain>
    </source>
</reference>
<sequence length="206" mass="22129">MITFVRGMLAEVGPRSGQSWATVDVGGVGYRVWTHARTVGKLPRIGEEVKLFTLMIVREDAMQLFGFLEPGERELFGQLVSVSGIGPRMGLALLETLAPTELVQAILQGNTRALALAPGVGAKTAQRLALELRSRLSKWREESGLSAMGARASSRVYEEVELALLALGFAPGEVVRALDAVAPAMAGEEQTEAWLRAAIAWLSEQG</sequence>
<accession>Q7NCU2</accession>